<organism>
    <name type="scientific">Clavibacter sepedonicus</name>
    <name type="common">Clavibacter michiganensis subsp. sepedonicus</name>
    <dbReference type="NCBI Taxonomy" id="31964"/>
    <lineage>
        <taxon>Bacteria</taxon>
        <taxon>Bacillati</taxon>
        <taxon>Actinomycetota</taxon>
        <taxon>Actinomycetes</taxon>
        <taxon>Micrococcales</taxon>
        <taxon>Microbacteriaceae</taxon>
        <taxon>Clavibacter</taxon>
    </lineage>
</organism>
<proteinExistence type="inferred from homology"/>
<name>NRDR_CLASE</name>
<protein>
    <recommendedName>
        <fullName evidence="1">Transcriptional repressor NrdR</fullName>
    </recommendedName>
</protein>
<reference key="1">
    <citation type="journal article" date="2008" name="J. Bacteriol.">
        <title>Genome of the actinomycete plant pathogen Clavibacter michiganensis subsp. sepedonicus suggests recent niche adaptation.</title>
        <authorList>
            <person name="Bentley S.D."/>
            <person name="Corton C."/>
            <person name="Brown S.E."/>
            <person name="Barron A."/>
            <person name="Clark L."/>
            <person name="Doggett J."/>
            <person name="Harris B."/>
            <person name="Ormond D."/>
            <person name="Quail M.A."/>
            <person name="May G."/>
            <person name="Francis D."/>
            <person name="Knudson D."/>
            <person name="Parkhill J."/>
            <person name="Ishimaru C.A."/>
        </authorList>
    </citation>
    <scope>NUCLEOTIDE SEQUENCE [LARGE SCALE GENOMIC DNA]</scope>
    <source>
        <strain>ATCC 33113 / DSM 20744 / JCM 9667 / LMG 2889 / ICMP 2535 / C-1</strain>
    </source>
</reference>
<gene>
    <name evidence="1" type="primary">nrdR</name>
    <name type="ordered locus">CMS1385</name>
</gene>
<feature type="chain" id="PRO_1000080732" description="Transcriptional repressor NrdR">
    <location>
        <begin position="1"/>
        <end position="157"/>
    </location>
</feature>
<feature type="domain" description="ATP-cone" evidence="1">
    <location>
        <begin position="46"/>
        <end position="136"/>
    </location>
</feature>
<feature type="zinc finger region" evidence="1">
    <location>
        <begin position="3"/>
        <end position="34"/>
    </location>
</feature>
<sequence>MFCPFCRHPDSRVVDSRTSDDGLSIRRRRQCPECGRRFSTTETASLSVIKRNGVVEPFSREKIVTGVRKACQGRPVTDTDLAVLAQRVEEAIRATGASQIEANDIGLSILPPLRELDEVAYLRFASVYQGFDSLDDFEAAIAQLRVAHAATPDADAL</sequence>
<keyword id="KW-0067">ATP-binding</keyword>
<keyword id="KW-0238">DNA-binding</keyword>
<keyword id="KW-0479">Metal-binding</keyword>
<keyword id="KW-0547">Nucleotide-binding</keyword>
<keyword id="KW-0678">Repressor</keyword>
<keyword id="KW-0804">Transcription</keyword>
<keyword id="KW-0805">Transcription regulation</keyword>
<keyword id="KW-0862">Zinc</keyword>
<keyword id="KW-0863">Zinc-finger</keyword>
<dbReference type="EMBL" id="AM849034">
    <property type="protein sequence ID" value="CAQ01496.1"/>
    <property type="molecule type" value="Genomic_DNA"/>
</dbReference>
<dbReference type="RefSeq" id="WP_012298763.1">
    <property type="nucleotide sequence ID" value="NZ_MZMN01000003.1"/>
</dbReference>
<dbReference type="SMR" id="B0RIK5"/>
<dbReference type="STRING" id="31964.CMS1385"/>
<dbReference type="KEGG" id="cms:CMS1385"/>
<dbReference type="eggNOG" id="COG1327">
    <property type="taxonomic scope" value="Bacteria"/>
</dbReference>
<dbReference type="HOGENOM" id="CLU_108412_1_0_11"/>
<dbReference type="OrthoDB" id="9807461at2"/>
<dbReference type="Proteomes" id="UP000001318">
    <property type="component" value="Chromosome"/>
</dbReference>
<dbReference type="GO" id="GO:0005524">
    <property type="term" value="F:ATP binding"/>
    <property type="evidence" value="ECO:0007669"/>
    <property type="project" value="UniProtKB-KW"/>
</dbReference>
<dbReference type="GO" id="GO:0003677">
    <property type="term" value="F:DNA binding"/>
    <property type="evidence" value="ECO:0007669"/>
    <property type="project" value="UniProtKB-KW"/>
</dbReference>
<dbReference type="GO" id="GO:0008270">
    <property type="term" value="F:zinc ion binding"/>
    <property type="evidence" value="ECO:0007669"/>
    <property type="project" value="UniProtKB-UniRule"/>
</dbReference>
<dbReference type="GO" id="GO:0045892">
    <property type="term" value="P:negative regulation of DNA-templated transcription"/>
    <property type="evidence" value="ECO:0007669"/>
    <property type="project" value="UniProtKB-UniRule"/>
</dbReference>
<dbReference type="HAMAP" id="MF_00440">
    <property type="entry name" value="NrdR"/>
    <property type="match status" value="1"/>
</dbReference>
<dbReference type="InterPro" id="IPR005144">
    <property type="entry name" value="ATP-cone_dom"/>
</dbReference>
<dbReference type="InterPro" id="IPR055173">
    <property type="entry name" value="NrdR-like_N"/>
</dbReference>
<dbReference type="InterPro" id="IPR003796">
    <property type="entry name" value="RNR_NrdR-like"/>
</dbReference>
<dbReference type="NCBIfam" id="TIGR00244">
    <property type="entry name" value="transcriptional regulator NrdR"/>
    <property type="match status" value="1"/>
</dbReference>
<dbReference type="PANTHER" id="PTHR30455">
    <property type="entry name" value="TRANSCRIPTIONAL REPRESSOR NRDR"/>
    <property type="match status" value="1"/>
</dbReference>
<dbReference type="PANTHER" id="PTHR30455:SF2">
    <property type="entry name" value="TRANSCRIPTIONAL REPRESSOR NRDR"/>
    <property type="match status" value="1"/>
</dbReference>
<dbReference type="Pfam" id="PF03477">
    <property type="entry name" value="ATP-cone"/>
    <property type="match status" value="1"/>
</dbReference>
<dbReference type="Pfam" id="PF22811">
    <property type="entry name" value="Zn_ribbon_NrdR"/>
    <property type="match status" value="1"/>
</dbReference>
<dbReference type="PROSITE" id="PS51161">
    <property type="entry name" value="ATP_CONE"/>
    <property type="match status" value="1"/>
</dbReference>
<accession>B0RIK5</accession>
<evidence type="ECO:0000255" key="1">
    <source>
        <dbReference type="HAMAP-Rule" id="MF_00440"/>
    </source>
</evidence>
<comment type="function">
    <text evidence="1">Negatively regulates transcription of bacterial ribonucleotide reductase nrd genes and operons by binding to NrdR-boxes.</text>
</comment>
<comment type="cofactor">
    <cofactor evidence="1">
        <name>Zn(2+)</name>
        <dbReference type="ChEBI" id="CHEBI:29105"/>
    </cofactor>
    <text evidence="1">Binds 1 zinc ion.</text>
</comment>
<comment type="similarity">
    <text evidence="1">Belongs to the NrdR family.</text>
</comment>